<organism>
    <name type="scientific">Aspergillus aculeatus (strain ATCC 16872 / CBS 172.66 / WB 5094)</name>
    <dbReference type="NCBI Taxonomy" id="690307"/>
    <lineage>
        <taxon>Eukaryota</taxon>
        <taxon>Fungi</taxon>
        <taxon>Dikarya</taxon>
        <taxon>Ascomycota</taxon>
        <taxon>Pezizomycotina</taxon>
        <taxon>Eurotiomycetes</taxon>
        <taxon>Eurotiomycetidae</taxon>
        <taxon>Eurotiales</taxon>
        <taxon>Aspergillaceae</taxon>
        <taxon>Aspergillus</taxon>
        <taxon>Aspergillus subgen. Circumdati</taxon>
    </lineage>
</organism>
<name>VRCA_ASPA1</name>
<evidence type="ECO:0000250" key="1">
    <source>
        <dbReference type="UniProtKB" id="A0A0P0ZEM1"/>
    </source>
</evidence>
<evidence type="ECO:0000250" key="2">
    <source>
        <dbReference type="UniProtKB" id="A2PZA5"/>
    </source>
</evidence>
<evidence type="ECO:0000250" key="3">
    <source>
        <dbReference type="UniProtKB" id="Q12051"/>
    </source>
</evidence>
<evidence type="ECO:0000250" key="4">
    <source>
        <dbReference type="UniProtKB" id="Q40577"/>
    </source>
</evidence>
<evidence type="ECO:0000256" key="5">
    <source>
        <dbReference type="SAM" id="MobiDB-lite"/>
    </source>
</evidence>
<evidence type="ECO:0000269" key="6">
    <source>
    </source>
</evidence>
<evidence type="ECO:0000303" key="7">
    <source>
    </source>
</evidence>
<evidence type="ECO:0000305" key="8"/>
<reference key="1">
    <citation type="journal article" date="2017" name="Genome Biol.">
        <title>Comparative genomics reveals high biological diversity and specific adaptations in the industrially and medically important fungal genus Aspergillus.</title>
        <authorList>
            <person name="de Vries R.P."/>
            <person name="Riley R."/>
            <person name="Wiebenga A."/>
            <person name="Aguilar-Osorio G."/>
            <person name="Amillis S."/>
            <person name="Uchima C.A."/>
            <person name="Anderluh G."/>
            <person name="Asadollahi M."/>
            <person name="Askin M."/>
            <person name="Barry K."/>
            <person name="Battaglia E."/>
            <person name="Bayram O."/>
            <person name="Benocci T."/>
            <person name="Braus-Stromeyer S.A."/>
            <person name="Caldana C."/>
            <person name="Canovas D."/>
            <person name="Cerqueira G.C."/>
            <person name="Chen F."/>
            <person name="Chen W."/>
            <person name="Choi C."/>
            <person name="Clum A."/>
            <person name="Dos Santos R.A."/>
            <person name="Damasio A.R."/>
            <person name="Diallinas G."/>
            <person name="Emri T."/>
            <person name="Fekete E."/>
            <person name="Flipphi M."/>
            <person name="Freyberg S."/>
            <person name="Gallo A."/>
            <person name="Gournas C."/>
            <person name="Habgood R."/>
            <person name="Hainaut M."/>
            <person name="Harispe M.L."/>
            <person name="Henrissat B."/>
            <person name="Hilden K.S."/>
            <person name="Hope R."/>
            <person name="Hossain A."/>
            <person name="Karabika E."/>
            <person name="Karaffa L."/>
            <person name="Karanyi Z."/>
            <person name="Krasevec N."/>
            <person name="Kuo A."/>
            <person name="Kusch H."/>
            <person name="LaButti K."/>
            <person name="Lagendijk E.L."/>
            <person name="Lapidus A."/>
            <person name="Levasseur A."/>
            <person name="Lindquist E."/>
            <person name="Lipzen A."/>
            <person name="Logrieco A.F."/>
            <person name="MacCabe A."/>
            <person name="Maekelae M.R."/>
            <person name="Malavazi I."/>
            <person name="Melin P."/>
            <person name="Meyer V."/>
            <person name="Mielnichuk N."/>
            <person name="Miskei M."/>
            <person name="Molnar A.P."/>
            <person name="Mule G."/>
            <person name="Ngan C.Y."/>
            <person name="Orejas M."/>
            <person name="Orosz E."/>
            <person name="Ouedraogo J.P."/>
            <person name="Overkamp K.M."/>
            <person name="Park H.-S."/>
            <person name="Perrone G."/>
            <person name="Piumi F."/>
            <person name="Punt P.J."/>
            <person name="Ram A.F."/>
            <person name="Ramon A."/>
            <person name="Rauscher S."/>
            <person name="Record E."/>
            <person name="Riano-Pachon D.M."/>
            <person name="Robert V."/>
            <person name="Roehrig J."/>
            <person name="Ruller R."/>
            <person name="Salamov A."/>
            <person name="Salih N.S."/>
            <person name="Samson R.A."/>
            <person name="Sandor E."/>
            <person name="Sanguinetti M."/>
            <person name="Schuetze T."/>
            <person name="Sepcic K."/>
            <person name="Shelest E."/>
            <person name="Sherlock G."/>
            <person name="Sophianopoulou V."/>
            <person name="Squina F.M."/>
            <person name="Sun H."/>
            <person name="Susca A."/>
            <person name="Todd R.B."/>
            <person name="Tsang A."/>
            <person name="Unkles S.E."/>
            <person name="van de Wiele N."/>
            <person name="van Rossen-Uffink D."/>
            <person name="Oliveira J.V."/>
            <person name="Vesth T.C."/>
            <person name="Visser J."/>
            <person name="Yu J.-H."/>
            <person name="Zhou M."/>
            <person name="Andersen M.R."/>
            <person name="Archer D.B."/>
            <person name="Baker S.E."/>
            <person name="Benoit I."/>
            <person name="Brakhage A.A."/>
            <person name="Braus G.H."/>
            <person name="Fischer R."/>
            <person name="Frisvad J.C."/>
            <person name="Goldman G.H."/>
            <person name="Houbraken J."/>
            <person name="Oakley B."/>
            <person name="Pocsi I."/>
            <person name="Scazzocchio C."/>
            <person name="Seiboth B."/>
            <person name="vanKuyk P.A."/>
            <person name="Wortman J."/>
            <person name="Dyer P.S."/>
            <person name="Grigoriev I.V."/>
        </authorList>
    </citation>
    <scope>NUCLEOTIDE SEQUENCE [LARGE SCALE GENOMIC DNA]</scope>
    <source>
        <strain>ATCC 16872 / CBS 172.66 / WB 5094</strain>
    </source>
</reference>
<reference key="2">
    <citation type="journal article" date="2024" name="Acta Pharm. Sin. B (APSB)">
        <title>Genomics-driven derivatization of the bioactive fungal sesterterpenoid variecolin: Creation of an unnatural analogue with improved anticancer properties.</title>
        <authorList>
            <person name="Yan D."/>
            <person name="Arakelyan J."/>
            <person name="Wan T."/>
            <person name="Raina R."/>
            <person name="Chan T.K."/>
            <person name="Ahn D."/>
            <person name="Kushnarev V."/>
            <person name="Cheung T.K."/>
            <person name="Chan H.C."/>
            <person name="Choi I."/>
            <person name="Ho P.Y."/>
            <person name="Hu F."/>
            <person name="Kim Y."/>
            <person name="Lau H.L."/>
            <person name="Law Y.L."/>
            <person name="Leung C.S."/>
            <person name="Tong C.Y."/>
            <person name="Wong K.K."/>
            <person name="Yim W.L."/>
            <person name="Karnaukhov N.S."/>
            <person name="Kong R.Y.C."/>
            <person name="Babak M.V."/>
            <person name="Matsuda Y."/>
        </authorList>
    </citation>
    <scope>FUNCTION</scope>
    <scope>CATALYTIC ACTIVITY</scope>
    <scope>PATHWAY</scope>
    <scope>BIOTECHNOLOGY</scope>
</reference>
<protein>
    <recommendedName>
        <fullName evidence="7">Bifunctional sesterterpene synthase</fullName>
    </recommendedName>
    <alternativeName>
        <fullName evidence="7">Variecolin biosynthesis cluster protein A</fullName>
    </alternativeName>
    <domain>
        <recommendedName>
            <fullName evidence="7">Geranylfarnesyl diphosphate synthase</fullName>
            <shortName evidence="7">GFDP synthase</shortName>
            <ecNumber evidence="6">2.5.1.-</ecNumber>
        </recommendedName>
    </domain>
    <domain>
        <recommendedName>
            <fullName evidence="7">Variecoladiene synthase</fullName>
            <ecNumber evidence="6">4.2.3.-</ecNumber>
        </recommendedName>
        <alternativeName>
            <fullName>Terpene cyclase</fullName>
        </alternativeName>
    </domain>
</protein>
<feature type="chain" id="PRO_0000460550" description="Bifunctional sesterterpene synthase">
    <location>
        <begin position="1"/>
        <end position="710"/>
    </location>
</feature>
<feature type="region of interest" description="stellata-2,6,19-trien synthase" evidence="2">
    <location>
        <begin position="1"/>
        <end position="327"/>
    </location>
</feature>
<feature type="region of interest" description="Geranylgeranyl diphosphate synthase" evidence="2">
    <location>
        <begin position="328"/>
        <end position="709"/>
    </location>
</feature>
<feature type="region of interest" description="Disordered" evidence="5">
    <location>
        <begin position="365"/>
        <end position="404"/>
    </location>
</feature>
<feature type="short sequence motif" description="DDXXD motif 1" evidence="1">
    <location>
        <begin position="92"/>
        <end position="96"/>
    </location>
</feature>
<feature type="short sequence motif" description="NSE motif" evidence="1">
    <location>
        <begin position="278"/>
        <end position="286"/>
    </location>
</feature>
<feature type="short sequence motif" description="DDXXD motif 2" evidence="1">
    <location>
        <begin position="469"/>
        <end position="473"/>
    </location>
</feature>
<feature type="compositionally biased region" description="Polar residues" evidence="5">
    <location>
        <begin position="368"/>
        <end position="380"/>
    </location>
</feature>
<feature type="binding site" evidence="4">
    <location>
        <position position="92"/>
    </location>
    <ligand>
        <name>Mg(2+)</name>
        <dbReference type="ChEBI" id="CHEBI:18420"/>
        <label>1</label>
    </ligand>
</feature>
<feature type="binding site" evidence="4">
    <location>
        <position position="92"/>
    </location>
    <ligand>
        <name>Mg(2+)</name>
        <dbReference type="ChEBI" id="CHEBI:18420"/>
        <label>2</label>
    </ligand>
</feature>
<feature type="binding site" evidence="2">
    <location>
        <position position="92"/>
    </location>
    <ligand>
        <name>substrate</name>
    </ligand>
</feature>
<feature type="binding site" evidence="4">
    <location>
        <position position="96"/>
    </location>
    <ligand>
        <name>Mg(2+)</name>
        <dbReference type="ChEBI" id="CHEBI:18420"/>
        <label>1</label>
    </ligand>
</feature>
<feature type="binding site" evidence="4">
    <location>
        <position position="96"/>
    </location>
    <ligand>
        <name>Mg(2+)</name>
        <dbReference type="ChEBI" id="CHEBI:18420"/>
        <label>2</label>
    </ligand>
</feature>
<feature type="binding site" evidence="2">
    <location>
        <position position="96"/>
    </location>
    <ligand>
        <name>substrate</name>
    </ligand>
</feature>
<feature type="binding site" evidence="2">
    <location>
        <begin position="181"/>
        <end position="184"/>
    </location>
    <ligand>
        <name>substrate</name>
    </ligand>
</feature>
<feature type="binding site" evidence="2">
    <location>
        <begin position="229"/>
        <end position="233"/>
    </location>
    <ligand>
        <name>substrate</name>
    </ligand>
</feature>
<feature type="binding site" evidence="2">
    <location>
        <begin position="318"/>
        <end position="319"/>
    </location>
    <ligand>
        <name>substrate</name>
    </ligand>
</feature>
<feature type="binding site" evidence="3">
    <location>
        <position position="430"/>
    </location>
    <ligand>
        <name>isopentenyl diphosphate</name>
        <dbReference type="ChEBI" id="CHEBI:128769"/>
    </ligand>
</feature>
<feature type="binding site" evidence="3">
    <location>
        <position position="433"/>
    </location>
    <ligand>
        <name>isopentenyl diphosphate</name>
        <dbReference type="ChEBI" id="CHEBI:128769"/>
    </ligand>
</feature>
<feature type="binding site" evidence="3">
    <location>
        <position position="462"/>
    </location>
    <ligand>
        <name>isopentenyl diphosphate</name>
        <dbReference type="ChEBI" id="CHEBI:128769"/>
    </ligand>
</feature>
<feature type="binding site" evidence="3">
    <location>
        <position position="469"/>
    </location>
    <ligand>
        <name>Mg(2+)</name>
        <dbReference type="ChEBI" id="CHEBI:18420"/>
        <label>3</label>
    </ligand>
</feature>
<feature type="binding site" evidence="3">
    <location>
        <position position="469"/>
    </location>
    <ligand>
        <name>Mg(2+)</name>
        <dbReference type="ChEBI" id="CHEBI:18420"/>
        <label>4</label>
    </ligand>
</feature>
<feature type="binding site" evidence="3">
    <location>
        <position position="473"/>
    </location>
    <ligand>
        <name>Mg(2+)</name>
        <dbReference type="ChEBI" id="CHEBI:18420"/>
        <label>3</label>
    </ligand>
</feature>
<feature type="binding site" evidence="3">
    <location>
        <position position="473"/>
    </location>
    <ligand>
        <name>Mg(2+)</name>
        <dbReference type="ChEBI" id="CHEBI:18420"/>
        <label>4</label>
    </ligand>
</feature>
<feature type="binding site" evidence="3">
    <location>
        <position position="478"/>
    </location>
    <ligand>
        <name>dimethylallyl diphosphate</name>
        <dbReference type="ChEBI" id="CHEBI:57623"/>
    </ligand>
</feature>
<feature type="binding site" evidence="3">
    <location>
        <position position="479"/>
    </location>
    <ligand>
        <name>isopentenyl diphosphate</name>
        <dbReference type="ChEBI" id="CHEBI:128769"/>
    </ligand>
</feature>
<feature type="binding site" evidence="3">
    <location>
        <position position="556"/>
    </location>
    <ligand>
        <name>dimethylallyl diphosphate</name>
        <dbReference type="ChEBI" id="CHEBI:57623"/>
    </ligand>
</feature>
<feature type="binding site" evidence="3">
    <location>
        <position position="557"/>
    </location>
    <ligand>
        <name>dimethylallyl diphosphate</name>
        <dbReference type="ChEBI" id="CHEBI:57623"/>
    </ligand>
</feature>
<feature type="binding site" evidence="3">
    <location>
        <position position="592"/>
    </location>
    <ligand>
        <name>dimethylallyl diphosphate</name>
        <dbReference type="ChEBI" id="CHEBI:57623"/>
    </ligand>
</feature>
<feature type="binding site" evidence="3">
    <location>
        <position position="599"/>
    </location>
    <ligand>
        <name>dimethylallyl diphosphate</name>
        <dbReference type="ChEBI" id="CHEBI:57623"/>
    </ligand>
</feature>
<feature type="binding site" evidence="3">
    <location>
        <position position="609"/>
    </location>
    <ligand>
        <name>dimethylallyl diphosphate</name>
        <dbReference type="ChEBI" id="CHEBI:57623"/>
    </ligand>
</feature>
<feature type="binding site" evidence="3">
    <location>
        <position position="619"/>
    </location>
    <ligand>
        <name>dimethylallyl diphosphate</name>
        <dbReference type="ChEBI" id="CHEBI:57623"/>
    </ligand>
</feature>
<sequence>MEFKFSAVVDPSTYQTQGLCDGLTVRYHKNTELEEIDCLRCQEHWREQVGPLGLYRGGLGHPWSGMSIAIPEALPERLGIVSYANELAFLHDDVTDIAKYYQGDEHNNDLKAAFDQVISTGTIKHAGSGKRALQAYVAKRMLSIDNDRAITSLKAWSTFLEKAGRQEDYRFKSEDDYLKYRVHDVGMLFWYGLLTFAQAITIPENELDTCHQLATTAYLHMALVNDLVSWDKERQSAAALGKDYVTNFIFVAMEEHAISEDQAQERCRREIQKATVDYLRVFEEVKARDDLSPDTKRYLESVLYSMSGNVVWSFHSPRYYTDASFSERQLEWMKNGIPKAQTSEGGASGVDQGEVKIHDRTINGHHAVTSNGTGTGSHDTLNGDGTAHENNSRDASIPGRTTNGISNSDTSLLSAVLQAPYEYITALPSKGFREHAIDALNVWFRVPAEKLAIIKSIITILHNASLMLDDLEDGSELRRGKASTHMIFGLGQTINSANYQLVRALQEIQKLGGPKSLLVFTEELHYLYVGQSMDLYWTSNLICPSINEYFRMVEHKTGGLVRLFGRLMALHSTNPVKVDMIDFSNRLGRYFQTRDDYQNLVSAEYTKQKGYCEDLEEGKFSLPLIHLLQTMPENHVLRNVWMQRRVRGTATHAQKETILELMKRNGSLQFTEDTLGILYGHLEKSIGELERRFGAENFQLRLIFELLRNG</sequence>
<proteinExistence type="evidence at protein level"/>
<gene>
    <name evidence="7" type="primary">vrcA</name>
    <name type="ORF">ASPACDRAFT_31194</name>
</gene>
<comment type="function">
    <text evidence="6">Multifunctional sesterterpene synthase; part of the gene cluster that mediates the biosynthesis of the sesterterpene variecolin (PubMed:38261827). The first step in the pathway is performed by the variecoladiene synthase vrcA that possesses both prenyl transferase and terpene cyclase activity, converting isopentenyl diphosphate and dimethylallyl diphosphate into geranylfarnesyl pyrophosphate (GFPP) and then converting GFPP into the tetracyclic variecoladiene (PubMed:38261827). The cytochrome P450 monooxygenase vrcB then catalyzes multiple oxidations at C-5 and C-20 positions to yield variecolin (PubMed:38261827).</text>
</comment>
<comment type="catalytic activity">
    <reaction evidence="6">
        <text>4 isopentenyl diphosphate + dimethylallyl diphosphate = (2E,6E,10E,14E)-geranylfarnesyl diphosphate + 4 diphosphate</text>
        <dbReference type="Rhea" id="RHEA:66860"/>
        <dbReference type="ChEBI" id="CHEBI:33019"/>
        <dbReference type="ChEBI" id="CHEBI:57623"/>
        <dbReference type="ChEBI" id="CHEBI:57907"/>
        <dbReference type="ChEBI" id="CHEBI:128769"/>
    </reaction>
    <physiologicalReaction direction="left-to-right" evidence="6">
        <dbReference type="Rhea" id="RHEA:66861"/>
    </physiologicalReaction>
</comment>
<comment type="catalytic activity">
    <reaction evidence="6">
        <text>(2E,6E,10E,14E)-geranylfarnesyl diphosphate = variecoladiene + diphosphate</text>
        <dbReference type="Rhea" id="RHEA:79687"/>
        <dbReference type="ChEBI" id="CHEBI:33019"/>
        <dbReference type="ChEBI" id="CHEBI:57907"/>
        <dbReference type="ChEBI" id="CHEBI:230481"/>
    </reaction>
    <physiologicalReaction direction="left-to-right" evidence="6">
        <dbReference type="Rhea" id="RHEA:79688"/>
    </physiologicalReaction>
</comment>
<comment type="pathway">
    <text evidence="6">Secondary metabolite biosynthesis; terpenoid biosynthesis.</text>
</comment>
<comment type="subunit">
    <text evidence="2">Hexamer.</text>
</comment>
<comment type="domain">
    <text evidence="8">The characteristic DDXXD motif for binding a trinuclear Mg(2+) cluster is conserved in both the N-terminal terpene cyclase and C-terminal prenyl transferase domains.</text>
</comment>
<comment type="domain">
    <text evidence="8">The Mg(2+)-binding NSE motif in the terpene cyclase domain is not completely conserved, since the asparagine residue in the is substituted with histidine.</text>
</comment>
<comment type="biotechnology">
    <text evidence="6">Variecolin and its derivatives produced by employing P450 monooxygenases from other fungal terpenoid pathways exhibit anticancer activity, thus, the skeleton of variecolin could be considered a privileged scaffold for developing anticancer agents.</text>
</comment>
<comment type="similarity">
    <text evidence="8">In the C-terminal section; belongs to the FPP/GGPP synthase family.</text>
</comment>
<comment type="similarity">
    <text evidence="8">In the N-terminal section; belongs to the terpene synthase family.</text>
</comment>
<accession>A0A1L9WQI2</accession>
<dbReference type="EC" id="2.5.1.-" evidence="6"/>
<dbReference type="EC" id="4.2.3.-" evidence="6"/>
<dbReference type="EMBL" id="KV878980">
    <property type="protein sequence ID" value="OJJ98433.1"/>
    <property type="molecule type" value="Genomic_DNA"/>
</dbReference>
<dbReference type="RefSeq" id="XP_020054773.1">
    <property type="nucleotide sequence ID" value="XM_020199792.1"/>
</dbReference>
<dbReference type="SMR" id="A0A1L9WQI2"/>
<dbReference type="STRING" id="690307.A0A1L9WQI2"/>
<dbReference type="GeneID" id="30973606"/>
<dbReference type="VEuPathDB" id="FungiDB:ASPACDRAFT_31194"/>
<dbReference type="OMA" id="DLYWTHN"/>
<dbReference type="OrthoDB" id="6921389at2759"/>
<dbReference type="UniPathway" id="UPA00213"/>
<dbReference type="Proteomes" id="UP000184546">
    <property type="component" value="Unassembled WGS sequence"/>
</dbReference>
<dbReference type="GO" id="GO:0016829">
    <property type="term" value="F:lyase activity"/>
    <property type="evidence" value="ECO:0007669"/>
    <property type="project" value="UniProtKB-KW"/>
</dbReference>
<dbReference type="GO" id="GO:0046872">
    <property type="term" value="F:metal ion binding"/>
    <property type="evidence" value="ECO:0007669"/>
    <property type="project" value="UniProtKB-KW"/>
</dbReference>
<dbReference type="GO" id="GO:0004659">
    <property type="term" value="F:prenyltransferase activity"/>
    <property type="evidence" value="ECO:0007669"/>
    <property type="project" value="InterPro"/>
</dbReference>
<dbReference type="GO" id="GO:0046165">
    <property type="term" value="P:alcohol biosynthetic process"/>
    <property type="evidence" value="ECO:0007669"/>
    <property type="project" value="UniProtKB-ARBA"/>
</dbReference>
<dbReference type="GO" id="GO:0008299">
    <property type="term" value="P:isoprenoid biosynthetic process"/>
    <property type="evidence" value="ECO:0007669"/>
    <property type="project" value="UniProtKB-KW"/>
</dbReference>
<dbReference type="GO" id="GO:0043386">
    <property type="term" value="P:mycotoxin biosynthetic process"/>
    <property type="evidence" value="ECO:0007669"/>
    <property type="project" value="UniProtKB-ARBA"/>
</dbReference>
<dbReference type="CDD" id="cd00685">
    <property type="entry name" value="Trans_IPPS_HT"/>
    <property type="match status" value="1"/>
</dbReference>
<dbReference type="Gene3D" id="1.10.600.10">
    <property type="entry name" value="Farnesyl Diphosphate Synthase"/>
    <property type="match status" value="2"/>
</dbReference>
<dbReference type="InterPro" id="IPR008949">
    <property type="entry name" value="Isoprenoid_synthase_dom_sf"/>
</dbReference>
<dbReference type="InterPro" id="IPR000092">
    <property type="entry name" value="Polyprenyl_synt"/>
</dbReference>
<dbReference type="InterPro" id="IPR033749">
    <property type="entry name" value="Polyprenyl_synt_CS"/>
</dbReference>
<dbReference type="PANTHER" id="PTHR12001">
    <property type="entry name" value="GERANYLGERANYL PYROPHOSPHATE SYNTHASE"/>
    <property type="match status" value="1"/>
</dbReference>
<dbReference type="PANTHER" id="PTHR12001:SF72">
    <property type="entry name" value="THIJ_PFPI FAMILY PROTEIN (AFU_ORTHOLOGUE AFUA_3G01210)-RELATED"/>
    <property type="match status" value="1"/>
</dbReference>
<dbReference type="Pfam" id="PF00348">
    <property type="entry name" value="polyprenyl_synt"/>
    <property type="match status" value="1"/>
</dbReference>
<dbReference type="Pfam" id="PF19086">
    <property type="entry name" value="Terpene_syn_C_2"/>
    <property type="match status" value="1"/>
</dbReference>
<dbReference type="SFLD" id="SFLDS00005">
    <property type="entry name" value="Isoprenoid_Synthase_Type_I"/>
    <property type="match status" value="1"/>
</dbReference>
<dbReference type="SUPFAM" id="SSF48576">
    <property type="entry name" value="Terpenoid synthases"/>
    <property type="match status" value="2"/>
</dbReference>
<dbReference type="PROSITE" id="PS00723">
    <property type="entry name" value="POLYPRENYL_SYNTHASE_1"/>
    <property type="match status" value="1"/>
</dbReference>
<keyword id="KW-0414">Isoprene biosynthesis</keyword>
<keyword id="KW-0456">Lyase</keyword>
<keyword id="KW-0460">Magnesium</keyword>
<keyword id="KW-0479">Metal-binding</keyword>
<keyword id="KW-0511">Multifunctional enzyme</keyword>
<keyword id="KW-1185">Reference proteome</keyword>
<keyword id="KW-0677">Repeat</keyword>
<keyword id="KW-0808">Transferase</keyword>